<organism>
    <name type="scientific">Rickettsia prowazekii (strain Madrid E)</name>
    <dbReference type="NCBI Taxonomy" id="272947"/>
    <lineage>
        <taxon>Bacteria</taxon>
        <taxon>Pseudomonadati</taxon>
        <taxon>Pseudomonadota</taxon>
        <taxon>Alphaproteobacteria</taxon>
        <taxon>Rickettsiales</taxon>
        <taxon>Rickettsiaceae</taxon>
        <taxon>Rickettsieae</taxon>
        <taxon>Rickettsia</taxon>
        <taxon>typhus group</taxon>
    </lineage>
</organism>
<dbReference type="EC" id="7.1.1.-" evidence="1"/>
<dbReference type="EMBL" id="AJ235272">
    <property type="protein sequence ID" value="CAA14986.1"/>
    <property type="molecule type" value="Genomic_DNA"/>
</dbReference>
<dbReference type="PIR" id="H71657">
    <property type="entry name" value="H71657"/>
</dbReference>
<dbReference type="RefSeq" id="NP_220910.1">
    <property type="nucleotide sequence ID" value="NC_000963.1"/>
</dbReference>
<dbReference type="RefSeq" id="WP_004597822.1">
    <property type="nucleotide sequence ID" value="NC_000963.1"/>
</dbReference>
<dbReference type="SMR" id="Q9ZD13"/>
<dbReference type="STRING" id="272947.gene:17555617"/>
<dbReference type="EnsemblBacteria" id="CAA14986">
    <property type="protein sequence ID" value="CAA14986"/>
    <property type="gene ID" value="CAA14986"/>
</dbReference>
<dbReference type="GeneID" id="57569661"/>
<dbReference type="KEGG" id="rpr:RP537"/>
<dbReference type="PATRIC" id="fig|272947.5.peg.548"/>
<dbReference type="eggNOG" id="COG1007">
    <property type="taxonomic scope" value="Bacteria"/>
</dbReference>
<dbReference type="HOGENOM" id="CLU_007100_1_3_5"/>
<dbReference type="OrthoDB" id="9811718at2"/>
<dbReference type="Proteomes" id="UP000002480">
    <property type="component" value="Chromosome"/>
</dbReference>
<dbReference type="GO" id="GO:0005886">
    <property type="term" value="C:plasma membrane"/>
    <property type="evidence" value="ECO:0007669"/>
    <property type="project" value="UniProtKB-SubCell"/>
</dbReference>
<dbReference type="GO" id="GO:0008137">
    <property type="term" value="F:NADH dehydrogenase (ubiquinone) activity"/>
    <property type="evidence" value="ECO:0007669"/>
    <property type="project" value="InterPro"/>
</dbReference>
<dbReference type="GO" id="GO:0050136">
    <property type="term" value="F:NADH:ubiquinone reductase (non-electrogenic) activity"/>
    <property type="evidence" value="ECO:0007669"/>
    <property type="project" value="UniProtKB-UniRule"/>
</dbReference>
<dbReference type="GO" id="GO:0048038">
    <property type="term" value="F:quinone binding"/>
    <property type="evidence" value="ECO:0007669"/>
    <property type="project" value="UniProtKB-KW"/>
</dbReference>
<dbReference type="GO" id="GO:0042773">
    <property type="term" value="P:ATP synthesis coupled electron transport"/>
    <property type="evidence" value="ECO:0007669"/>
    <property type="project" value="InterPro"/>
</dbReference>
<dbReference type="HAMAP" id="MF_00445">
    <property type="entry name" value="NDH1_NuoN_1"/>
    <property type="match status" value="1"/>
</dbReference>
<dbReference type="InterPro" id="IPR010096">
    <property type="entry name" value="NADH-Q_OxRdtase_suN/2"/>
</dbReference>
<dbReference type="InterPro" id="IPR001750">
    <property type="entry name" value="ND/Mrp_TM"/>
</dbReference>
<dbReference type="NCBIfam" id="TIGR01770">
    <property type="entry name" value="NDH_I_N"/>
    <property type="match status" value="1"/>
</dbReference>
<dbReference type="NCBIfam" id="NF004447">
    <property type="entry name" value="PRK05777.2-5"/>
    <property type="match status" value="1"/>
</dbReference>
<dbReference type="PANTHER" id="PTHR22773">
    <property type="entry name" value="NADH DEHYDROGENASE"/>
    <property type="match status" value="1"/>
</dbReference>
<dbReference type="Pfam" id="PF00361">
    <property type="entry name" value="Proton_antipo_M"/>
    <property type="match status" value="1"/>
</dbReference>
<feature type="chain" id="PRO_0000117698" description="NADH-quinone oxidoreductase subunit N">
    <location>
        <begin position="1"/>
        <end position="458"/>
    </location>
</feature>
<feature type="transmembrane region" description="Helical" evidence="1">
    <location>
        <begin position="2"/>
        <end position="22"/>
    </location>
</feature>
<feature type="transmembrane region" description="Helical" evidence="1">
    <location>
        <begin position="30"/>
        <end position="50"/>
    </location>
</feature>
<feature type="transmembrane region" description="Helical" evidence="1">
    <location>
        <begin position="71"/>
        <end position="91"/>
    </location>
</feature>
<feature type="transmembrane region" description="Helical" evidence="1">
    <location>
        <begin position="93"/>
        <end position="113"/>
    </location>
</feature>
<feature type="transmembrane region" description="Helical" evidence="1">
    <location>
        <begin position="118"/>
        <end position="138"/>
    </location>
</feature>
<feature type="transmembrane region" description="Helical" evidence="1">
    <location>
        <begin position="153"/>
        <end position="173"/>
    </location>
</feature>
<feature type="transmembrane region" description="Helical" evidence="1">
    <location>
        <begin position="196"/>
        <end position="216"/>
    </location>
</feature>
<feature type="transmembrane region" description="Helical" evidence="1">
    <location>
        <begin position="235"/>
        <end position="255"/>
    </location>
</feature>
<feature type="transmembrane region" description="Helical" evidence="1">
    <location>
        <begin position="261"/>
        <end position="281"/>
    </location>
</feature>
<feature type="transmembrane region" description="Helical" evidence="1">
    <location>
        <begin position="290"/>
        <end position="310"/>
    </location>
</feature>
<feature type="transmembrane region" description="Helical" evidence="1">
    <location>
        <begin position="319"/>
        <end position="339"/>
    </location>
</feature>
<feature type="transmembrane region" description="Helical" evidence="1">
    <location>
        <begin position="361"/>
        <end position="381"/>
    </location>
</feature>
<feature type="transmembrane region" description="Helical" evidence="1">
    <location>
        <begin position="397"/>
        <end position="417"/>
    </location>
</feature>
<feature type="transmembrane region" description="Helical" evidence="1">
    <location>
        <begin position="438"/>
        <end position="458"/>
    </location>
</feature>
<proteinExistence type="inferred from homology"/>
<keyword id="KW-0997">Cell inner membrane</keyword>
<keyword id="KW-1003">Cell membrane</keyword>
<keyword id="KW-0472">Membrane</keyword>
<keyword id="KW-0520">NAD</keyword>
<keyword id="KW-0874">Quinone</keyword>
<keyword id="KW-1185">Reference proteome</keyword>
<keyword id="KW-1278">Translocase</keyword>
<keyword id="KW-0812">Transmembrane</keyword>
<keyword id="KW-1133">Transmembrane helix</keyword>
<keyword id="KW-0813">Transport</keyword>
<keyword id="KW-0830">Ubiquinone</keyword>
<accession>Q9ZD13</accession>
<name>NUON_RICPR</name>
<reference key="1">
    <citation type="journal article" date="1998" name="Nature">
        <title>The genome sequence of Rickettsia prowazekii and the origin of mitochondria.</title>
        <authorList>
            <person name="Andersson S.G.E."/>
            <person name="Zomorodipour A."/>
            <person name="Andersson J.O."/>
            <person name="Sicheritz-Ponten T."/>
            <person name="Alsmark U.C.M."/>
            <person name="Podowski R.M."/>
            <person name="Naeslund A.K."/>
            <person name="Eriksson A.-S."/>
            <person name="Winkler H.H."/>
            <person name="Kurland C.G."/>
        </authorList>
    </citation>
    <scope>NUCLEOTIDE SEQUENCE [LARGE SCALE GENOMIC DNA]</scope>
    <source>
        <strain>Madrid E</strain>
    </source>
</reference>
<gene>
    <name evidence="1" type="primary">nuoN</name>
    <name type="ordered locus">RP537</name>
</gene>
<sequence length="458" mass="51165">MLLLLPEITLTLIALLGQCFALMIPNKNRIIYNIVILLCIISIFLTFKYSSYEGIWHSFATERNIGISKSIILLFTIVSLIIYRDYSILVGETLKFEFITLMLLSIVGIFVAISSRNFLLLFCGMELTALTSYALAGFKLNDIKSSEGALKYFILGSLVSCLSLFGISFIYGFGGSIQFDDILHQLNNDSEIKPGLIIGIVLFLSSIFFKLASSPLHFWIPDVYEGSPISSVTYFTAASKIGMVIVLLNISKLIIGNYYPINYNLIKIIAILSMLFGAFGAIRQTSLKRLMAYSTILNIGYVLIGVLLHNQEGYKAALLYILIYAVVSIGFFTCLIMLFGKDVDNASFKTIEGIAETHKTIAALISIVMFSMIGIPPLTGFFGKYYLFYQAINKKEFTLAYCGIFTSVVAAFYYLKVVKAMYFSKKIAIIKLPMQYGLLLINYLVLGFLLFGSFIILF</sequence>
<protein>
    <recommendedName>
        <fullName evidence="1">NADH-quinone oxidoreductase subunit N</fullName>
        <ecNumber evidence="1">7.1.1.-</ecNumber>
    </recommendedName>
    <alternativeName>
        <fullName evidence="1">NADH dehydrogenase I subunit N</fullName>
    </alternativeName>
    <alternativeName>
        <fullName evidence="1">NDH-1 subunit N</fullName>
    </alternativeName>
</protein>
<evidence type="ECO:0000255" key="1">
    <source>
        <dbReference type="HAMAP-Rule" id="MF_00445"/>
    </source>
</evidence>
<comment type="function">
    <text evidence="1">NDH-1 shuttles electrons from NADH, via FMN and iron-sulfur (Fe-S) centers, to quinones in the respiratory chain. The immediate electron acceptor for the enzyme in this species is believed to be ubiquinone. Couples the redox reaction to proton translocation (for every two electrons transferred, four hydrogen ions are translocated across the cytoplasmic membrane), and thus conserves the redox energy in a proton gradient.</text>
</comment>
<comment type="catalytic activity">
    <reaction evidence="1">
        <text>a quinone + NADH + 5 H(+)(in) = a quinol + NAD(+) + 4 H(+)(out)</text>
        <dbReference type="Rhea" id="RHEA:57888"/>
        <dbReference type="ChEBI" id="CHEBI:15378"/>
        <dbReference type="ChEBI" id="CHEBI:24646"/>
        <dbReference type="ChEBI" id="CHEBI:57540"/>
        <dbReference type="ChEBI" id="CHEBI:57945"/>
        <dbReference type="ChEBI" id="CHEBI:132124"/>
    </reaction>
</comment>
<comment type="subunit">
    <text evidence="1">NDH-1 is composed of 14 different subunits. Subunits NuoA, H, J, K, L, M, N constitute the membrane sector of the complex.</text>
</comment>
<comment type="subcellular location">
    <subcellularLocation>
        <location evidence="1">Cell inner membrane</location>
        <topology evidence="1">Multi-pass membrane protein</topology>
    </subcellularLocation>
</comment>
<comment type="similarity">
    <text evidence="1">Belongs to the complex I subunit 2 family.</text>
</comment>